<comment type="function">
    <molecule>Isoform Membrane-bound glycoprotein G</molecule>
    <text evidence="1">Attaches the virion to the host cell membrane by interacting with heparan sulfate, initiating the infection. Unlike the other paramyxovirus attachment proteins, lacks both neuraminidase and hemagglutinating activities.</text>
</comment>
<comment type="function">
    <molecule>Isoform Secreted glycoprotein G</molecule>
    <text evidence="1">Helps the virus escape antibody-dependent restriction of replication by acting as an antigen decoy and by modulating the activity of leukocytes bearing Fc-gamma receptors.</text>
</comment>
<comment type="subunit">
    <molecule>Isoform Membrane-bound glycoprotein G</molecule>
    <text evidence="1">Homooligomer. Interacts (via N-terminus) with protein M. Part of a complex composed of F1, F2 and G glycoproteins. Interacts with protein SH. Interacts with host heparate sulfate; this interaction probably participates in the viral attachment to the host cell.</text>
</comment>
<comment type="subcellular location">
    <molecule>Isoform Membrane-bound glycoprotein G</molecule>
    <subcellularLocation>
        <location evidence="1">Virion membrane</location>
        <topology evidence="1">Single-pass type II membrane protein</topology>
    </subcellularLocation>
    <subcellularLocation>
        <location evidence="1">Host cell membrane</location>
        <topology evidence="1">Single-pass type II membrane protein</topology>
    </subcellularLocation>
</comment>
<comment type="subcellular location">
    <molecule>Isoform Secreted glycoprotein G</molecule>
    <subcellularLocation>
        <location evidence="2">Secreted</location>
    </subcellularLocation>
    <text evidence="2">The protein is shed from infected cells before the appearance of progeny virus. The initiation at the downstream methionine removes a portion of the transmembrane domain. The remaining hydrophobic portion of the sG protein is essential for translocating it into the lumen of the ER during translation and would likely maintain its membrane association until a proteolytic event releases the mature sG protein into the medium.</text>
</comment>
<comment type="alternative products">
    <event type="alternative initiation"/>
    <isoform>
        <id>P69351-1</id>
        <name>Membrane-bound glycoprotein G</name>
        <sequence type="displayed"/>
    </isoform>
    <isoform>
        <id>P69351-2</id>
        <name>Secreted glycoprotein G</name>
        <sequence type="described" ref="VSP_036514"/>
    </isoform>
</comment>
<comment type="domain">
    <molecule>Isoform Membrane-bound glycoprotein G</molecule>
    <text evidence="1">Contains a linear heparin binding domain essential for virus attachment to the host.</text>
</comment>
<comment type="PTM">
    <molecule>Isoform Secreted glycoprotein G</molecule>
    <text evidence="2">Cleaved to give rise to the mature sG protein which lacks the transmembrane domain.</text>
</comment>
<comment type="PTM">
    <molecule>Isoform Membrane-bound glycoprotein G</molecule>
    <text evidence="1">N- and O-glycosylated. May carry 30-40 separate O-linked carbohydrate chains distributed among the serine and threonine residues.</text>
</comment>
<comment type="PTM">
    <molecule>Isoform Membrane-bound glycoprotein G</molecule>
    <text evidence="1">Palmitoylated.</text>
</comment>
<comment type="similarity">
    <text evidence="5">Belongs to the pneumoviruses glycoprotein G family.</text>
</comment>
<accession>P69351</accession>
<accession>O12584</accession>
<accession>O12865</accession>
<accession>Q84183</accession>
<gene>
    <name type="primary">G</name>
</gene>
<keyword id="KW-0024">Alternative initiation</keyword>
<keyword id="KW-1015">Disulfide bond</keyword>
<keyword id="KW-0325">Glycoprotein</keyword>
<keyword id="KW-1032">Host cell membrane</keyword>
<keyword id="KW-1043">Host membrane</keyword>
<keyword id="KW-0945">Host-virus interaction</keyword>
<keyword id="KW-0472">Membrane</keyword>
<keyword id="KW-0964">Secreted</keyword>
<keyword id="KW-0812">Transmembrane</keyword>
<keyword id="KW-1133">Transmembrane helix</keyword>
<keyword id="KW-1161">Viral attachment to host cell</keyword>
<keyword id="KW-0899">Viral immunoevasion</keyword>
<keyword id="KW-0946">Virion</keyword>
<keyword id="KW-1160">Virus entry into host cell</keyword>
<evidence type="ECO:0000250" key="1">
    <source>
        <dbReference type="UniProtKB" id="P03423"/>
    </source>
</evidence>
<evidence type="ECO:0000250" key="2">
    <source>
        <dbReference type="UniProtKB" id="P20895"/>
    </source>
</evidence>
<evidence type="ECO:0000255" key="3"/>
<evidence type="ECO:0000256" key="4">
    <source>
        <dbReference type="SAM" id="MobiDB-lite"/>
    </source>
</evidence>
<evidence type="ECO:0000305" key="5"/>
<organism>
    <name type="scientific">Bovine respiratory syncytial virus (strain 220-69)</name>
    <name type="common">BRS</name>
    <dbReference type="NCBI Taxonomy" id="82822"/>
    <lineage>
        <taxon>Viruses</taxon>
        <taxon>Riboviria</taxon>
        <taxon>Orthornavirae</taxon>
        <taxon>Negarnaviricota</taxon>
        <taxon>Haploviricotina</taxon>
        <taxon>Monjiviricetes</taxon>
        <taxon>Mononegavirales</taxon>
        <taxon>Pneumoviridae</taxon>
        <taxon>Orthopneumovirus</taxon>
        <taxon>Orthopneumovirus bovis</taxon>
    </lineage>
</organism>
<organismHost>
    <name type="scientific">Bos taurus</name>
    <name type="common">Bovine</name>
    <dbReference type="NCBI Taxonomy" id="9913"/>
</organismHost>
<reference key="1">
    <citation type="journal article" date="1997" name="Virology">
        <title>Antigenically distinct G glycoproteins of BRSV strains share a high degree of genetic homogeneity.</title>
        <authorList>
            <person name="Furze J."/>
            <person name="Roberts S."/>
            <person name="Wertz G."/>
            <person name="Taylor G."/>
        </authorList>
    </citation>
    <scope>NUCLEOTIDE SEQUENCE [MRNA]</scope>
</reference>
<protein>
    <recommendedName>
        <fullName>Major surface glycoprotein G</fullName>
    </recommendedName>
    <alternativeName>
        <fullName>Attachment glycoprotein G</fullName>
    </alternativeName>
    <alternativeName>
        <fullName>Membrane-bound glycoprotein</fullName>
        <shortName>mG</shortName>
    </alternativeName>
    <component>
        <recommendedName>
            <fullName evidence="2">Mature secreted glycoprotein G</fullName>
            <shortName evidence="2">Mature sG</shortName>
        </recommendedName>
    </component>
</protein>
<dbReference type="EMBL" id="Y08720">
    <property type="protein sequence ID" value="CAA69970.1"/>
    <property type="molecule type" value="mRNA"/>
</dbReference>
<dbReference type="SMR" id="P69351"/>
<dbReference type="GlyCosmos" id="P69351">
    <property type="glycosylation" value="13 sites, No reported glycans"/>
</dbReference>
<dbReference type="GO" id="GO:0005576">
    <property type="term" value="C:extracellular region"/>
    <property type="evidence" value="ECO:0007669"/>
    <property type="project" value="UniProtKB-SubCell"/>
</dbReference>
<dbReference type="GO" id="GO:0020002">
    <property type="term" value="C:host cell plasma membrane"/>
    <property type="evidence" value="ECO:0007669"/>
    <property type="project" value="UniProtKB-SubCell"/>
</dbReference>
<dbReference type="GO" id="GO:0016020">
    <property type="term" value="C:membrane"/>
    <property type="evidence" value="ECO:0007669"/>
    <property type="project" value="UniProtKB-KW"/>
</dbReference>
<dbReference type="GO" id="GO:0055036">
    <property type="term" value="C:virion membrane"/>
    <property type="evidence" value="ECO:0007669"/>
    <property type="project" value="UniProtKB-SubCell"/>
</dbReference>
<dbReference type="GO" id="GO:0046718">
    <property type="term" value="P:symbiont entry into host cell"/>
    <property type="evidence" value="ECO:0007669"/>
    <property type="project" value="UniProtKB-KW"/>
</dbReference>
<dbReference type="GO" id="GO:0019062">
    <property type="term" value="P:virion attachment to host cell"/>
    <property type="evidence" value="ECO:0007669"/>
    <property type="project" value="UniProtKB-KW"/>
</dbReference>
<dbReference type="InterPro" id="IPR000925">
    <property type="entry name" value="G_prot"/>
</dbReference>
<dbReference type="Pfam" id="PF00802">
    <property type="entry name" value="Glycoprotein_G"/>
    <property type="match status" value="1"/>
</dbReference>
<proteinExistence type="evidence at transcript level"/>
<feature type="chain" id="PRO_0000142846" description="Major surface glycoprotein G">
    <location>
        <begin position="1"/>
        <end position="257"/>
    </location>
</feature>
<feature type="chain" id="PRO_0000451315" description="Mature secreted glycoprotein G">
    <location>
        <begin position="66"/>
        <end position="257"/>
    </location>
</feature>
<feature type="topological domain" description="Cytoplasmic" evidence="3">
    <location>
        <begin position="1"/>
        <end position="37"/>
    </location>
</feature>
<feature type="transmembrane region" description="Helical" evidence="3">
    <location>
        <begin position="38"/>
        <end position="66"/>
    </location>
</feature>
<feature type="topological domain" description="Extracellular" evidence="3">
    <location>
        <begin position="67"/>
        <end position="257"/>
    </location>
</feature>
<feature type="region of interest" description="Disordered" evidence="4">
    <location>
        <begin position="70"/>
        <end position="92"/>
    </location>
</feature>
<feature type="region of interest" description="Disordered" evidence="4">
    <location>
        <begin position="118"/>
        <end position="166"/>
    </location>
</feature>
<feature type="region of interest" description="Binding to host heparan sulfate" evidence="1">
    <location>
        <begin position="187"/>
        <end position="198"/>
    </location>
</feature>
<feature type="region of interest" description="Disordered" evidence="4">
    <location>
        <begin position="204"/>
        <end position="257"/>
    </location>
</feature>
<feature type="compositionally biased region" description="Polar residues" evidence="4">
    <location>
        <begin position="73"/>
        <end position="90"/>
    </location>
</feature>
<feature type="compositionally biased region" description="Polar residues" evidence="4">
    <location>
        <begin position="150"/>
        <end position="166"/>
    </location>
</feature>
<feature type="compositionally biased region" description="Basic residues" evidence="4">
    <location>
        <begin position="204"/>
        <end position="222"/>
    </location>
</feature>
<feature type="compositionally biased region" description="Polar residues" evidence="4">
    <location>
        <begin position="231"/>
        <end position="243"/>
    </location>
</feature>
<feature type="site" description="Cleavage" evidence="1">
    <location>
        <begin position="65"/>
        <end position="66"/>
    </location>
</feature>
<feature type="glycosylation site" description="O-linked (GalNAc...) threonine; by host" evidence="1">
    <location>
        <position position="72"/>
    </location>
</feature>
<feature type="glycosylation site" description="O-linked (GalNAc...) threonine; by host" evidence="1">
    <location>
        <position position="80"/>
    </location>
</feature>
<feature type="glycosylation site" description="N-linked (GlcNAc...) asparagine; by host" evidence="3">
    <location>
        <position position="85"/>
    </location>
</feature>
<feature type="glycosylation site" description="O-linked (GalNAc...) threonine; by host" evidence="1">
    <location>
        <position position="87"/>
    </location>
</feature>
<feature type="glycosylation site" description="O-linked (GalNAc...) threonine; by host" evidence="1">
    <location>
        <position position="92"/>
    </location>
</feature>
<feature type="glycosylation site" description="O-linked (GalNAc...) serine; by host" evidence="3">
    <location>
        <position position="105"/>
    </location>
</feature>
<feature type="glycosylation site" description="O-linked (GalNAc...) threonine; by host" evidence="3">
    <location>
        <position position="139"/>
    </location>
</feature>
<feature type="glycosylation site" description="N-linked (GlcNAc...) asparagine; by host" evidence="3">
    <location>
        <position position="163"/>
    </location>
</feature>
<feature type="glycosylation site" description="O-linked (GalNAc...) threonine; by host" evidence="3">
    <location>
        <position position="199"/>
    </location>
</feature>
<feature type="glycosylation site" description="O-linked (GalNAc...) threonine; by host" evidence="3">
    <location>
        <position position="215"/>
    </location>
</feature>
<feature type="glycosylation site" description="N-linked (GlcNAc...) asparagine; by host" evidence="3">
    <location>
        <position position="233"/>
    </location>
</feature>
<feature type="glycosylation site" description="N-linked (GlcNAc...) asparagine; by host" evidence="3">
    <location>
        <position position="251"/>
    </location>
</feature>
<feature type="glycosylation site" description="O-linked (GalNAc...) serine; by host" evidence="3">
    <location>
        <position position="253"/>
    </location>
</feature>
<feature type="disulfide bond" evidence="1">
    <location>
        <begin position="173"/>
        <end position="186"/>
    </location>
</feature>
<feature type="disulfide bond" evidence="1">
    <location>
        <begin position="176"/>
        <end position="182"/>
    </location>
</feature>
<feature type="splice variant" id="VSP_036514" description="In isoform Secreted glycoprotein G." evidence="1">
    <location>
        <begin position="1"/>
        <end position="47"/>
    </location>
</feature>
<name>GLYC_BRSV9</name>
<sequence length="257" mass="28388">MSNHTHHLKFKTLKRAWKASKYFIVGLSCLYKFNLKSLVQTALTTLAMITLTSLVITALIYISVGNAKAKPTSKPTIQQTQRPQNHTSPLFTEHNYKSTHTSIQSTTLSQLLNIDTTRGTTYSHPTDETQNRKIKSQSTLPATRQPPINPSGSNPPENHQDHNNSQTLPYVPCSTCEGNLACSSLCQIGLERAPSRAPTITLKKAPKPKTTKKPTKTTIHHRTSPEAKLQPKNNTAAPQQGILSSPEHHTNQSTTQI</sequence>